<sequence length="255" mass="27305">MLSGMEKQPAMLLVLVTLCAFACKRSVAQSAFATFYGGKDGSGTMGGACGYGNLYNAGYGLYNAALSSALFNDGAMCGACYTITCDTSQTKWCKPGGNSITITATNLCPPNWALPSNSGGWCNPPRQHFDMSQPAWENIAVYQAGIVPVNYKRVPCQRSGGIRFAISGHDYFELVTVTNVGGSGVVAQMSIKGSNTGWMAMSRNWGANWQSNAYLAGQSLSFIVQLDDGRKVTAWNVAPSNWFFGATYSTSWVQF</sequence>
<protein>
    <recommendedName>
        <fullName>Expansin-A3</fullName>
    </recommendedName>
    <alternativeName>
        <fullName>Alpha-expansin-3</fullName>
    </alternativeName>
    <alternativeName>
        <fullName>OsEXP3</fullName>
    </alternativeName>
    <alternativeName>
        <fullName>OsEXPA3</fullName>
    </alternativeName>
    <alternativeName>
        <fullName>OsaEXPa1.18</fullName>
    </alternativeName>
    <alternativeName>
        <fullName>RiExD</fullName>
    </alternativeName>
</protein>
<comment type="function">
    <text evidence="1">May cause loosening and extension of plant cell walls by disrupting non-covalent bonding between cellulose microfibrils and matrix glucans. No enzymatic activity has been found. May be required for rapid internodal elongation in deepwater rice during submergence (By similarity).</text>
</comment>
<comment type="subcellular location">
    <subcellularLocation>
        <location evidence="1">Secreted</location>
        <location evidence="1">Cell wall</location>
    </subcellularLocation>
    <subcellularLocation>
        <location evidence="1">Membrane</location>
        <topology evidence="1">Peripheral membrane protein</topology>
    </subcellularLocation>
</comment>
<comment type="tissue specificity">
    <text evidence="5 6">Expressed in the epidermis and vascular cylinder of the root tip, lateral root primordia, adventitious root primordia, shoot apex and leaf primordia.</text>
</comment>
<comment type="developmental stage">
    <text evidence="5">Expressed in the apical region (growing zone) of the root hair.</text>
</comment>
<comment type="similarity">
    <text evidence="7">Belongs to the expansin family. Expansin A subfamily.</text>
</comment>
<comment type="online information" name="EXPANSIN homepage">
    <link uri="https://www.dept.psu.edu/biology/groups/expansins/index.htm"/>
</comment>
<accession>Q40637</accession>
<accession>Q0DJI2</accession>
<gene>
    <name type="primary">EXPA3</name>
    <name type="synonym">EXP3</name>
    <name type="ordered locus">Os05g0276500</name>
    <name type="ordered locus">LOC_Os05g19570</name>
</gene>
<name>EXPA3_ORYSJ</name>
<organism>
    <name type="scientific">Oryza sativa subsp. japonica</name>
    <name type="common">Rice</name>
    <dbReference type="NCBI Taxonomy" id="39947"/>
    <lineage>
        <taxon>Eukaryota</taxon>
        <taxon>Viridiplantae</taxon>
        <taxon>Streptophyta</taxon>
        <taxon>Embryophyta</taxon>
        <taxon>Tracheophyta</taxon>
        <taxon>Spermatophyta</taxon>
        <taxon>Magnoliopsida</taxon>
        <taxon>Liliopsida</taxon>
        <taxon>Poales</taxon>
        <taxon>Poaceae</taxon>
        <taxon>BOP clade</taxon>
        <taxon>Oryzoideae</taxon>
        <taxon>Oryzeae</taxon>
        <taxon>Oryzinae</taxon>
        <taxon>Oryza</taxon>
        <taxon>Oryza sativa</taxon>
    </lineage>
</organism>
<feature type="signal peptide" evidence="2">
    <location>
        <begin position="1"/>
        <end position="28"/>
    </location>
</feature>
<feature type="chain" id="PRO_0000251982" description="Expansin-A3">
    <location>
        <begin position="29"/>
        <end position="255"/>
    </location>
</feature>
<feature type="domain" description="Expansin-like EG45" evidence="4">
    <location>
        <begin position="46"/>
        <end position="161"/>
    </location>
</feature>
<feature type="domain" description="Expansin-like CBD" evidence="3">
    <location>
        <begin position="171"/>
        <end position="250"/>
    </location>
</feature>
<feature type="disulfide bond" evidence="4">
    <location>
        <begin position="49"/>
        <end position="77"/>
    </location>
</feature>
<feature type="disulfide bond" evidence="4">
    <location>
        <begin position="80"/>
        <end position="156"/>
    </location>
</feature>
<feature type="disulfide bond" evidence="4">
    <location>
        <begin position="85"/>
        <end position="93"/>
    </location>
</feature>
<feature type="sequence conflict" description="In Ref. 1; AAB38075." evidence="7" ref="1">
    <original>G</original>
    <variation>C</variation>
    <location>
        <position position="43"/>
    </location>
</feature>
<feature type="sequence conflict" description="In Ref. 1; AAB38075." evidence="7" ref="1">
    <original>R</original>
    <variation>L</variation>
    <location>
        <position position="126"/>
    </location>
</feature>
<keyword id="KW-0134">Cell wall</keyword>
<keyword id="KW-0961">Cell wall biogenesis/degradation</keyword>
<keyword id="KW-1015">Disulfide bond</keyword>
<keyword id="KW-0472">Membrane</keyword>
<keyword id="KW-1185">Reference proteome</keyword>
<keyword id="KW-0964">Secreted</keyword>
<keyword id="KW-0732">Signal</keyword>
<evidence type="ECO:0000250" key="1"/>
<evidence type="ECO:0000255" key="2"/>
<evidence type="ECO:0000255" key="3">
    <source>
        <dbReference type="PROSITE-ProRule" id="PRU00078"/>
    </source>
</evidence>
<evidence type="ECO:0000255" key="4">
    <source>
        <dbReference type="PROSITE-ProRule" id="PRU00079"/>
    </source>
</evidence>
<evidence type="ECO:0000269" key="5">
    <source>
    </source>
</evidence>
<evidence type="ECO:0000269" key="6">
    <source>
    </source>
</evidence>
<evidence type="ECO:0000305" key="7"/>
<proteinExistence type="evidence at transcript level"/>
<dbReference type="EMBL" id="U30479">
    <property type="protein sequence ID" value="AAB38075.1"/>
    <property type="molecule type" value="mRNA"/>
</dbReference>
<dbReference type="EMBL" id="AC130731">
    <property type="status" value="NOT_ANNOTATED_CDS"/>
    <property type="molecule type" value="Genomic_DNA"/>
</dbReference>
<dbReference type="EMBL" id="AP008211">
    <property type="protein sequence ID" value="BAF16991.1"/>
    <property type="molecule type" value="Genomic_DNA"/>
</dbReference>
<dbReference type="EMBL" id="AP014961">
    <property type="protein sequence ID" value="BAS93116.1"/>
    <property type="molecule type" value="Genomic_DNA"/>
</dbReference>
<dbReference type="EMBL" id="AK060313">
    <property type="protein sequence ID" value="BAG87400.1"/>
    <property type="molecule type" value="mRNA"/>
</dbReference>
<dbReference type="PIR" id="T03299">
    <property type="entry name" value="T03299"/>
</dbReference>
<dbReference type="RefSeq" id="XP_015638086.1">
    <property type="nucleotide sequence ID" value="XM_015782600.1"/>
</dbReference>
<dbReference type="SMR" id="Q40637"/>
<dbReference type="FunCoup" id="Q40637">
    <property type="interactions" value="13"/>
</dbReference>
<dbReference type="STRING" id="39947.Q40637"/>
<dbReference type="PaxDb" id="39947-Q40637"/>
<dbReference type="EnsemblPlants" id="Os05t0276500-01">
    <property type="protein sequence ID" value="Os05t0276500-01"/>
    <property type="gene ID" value="Os05g0276500"/>
</dbReference>
<dbReference type="Gramene" id="Os05t0276500-01">
    <property type="protein sequence ID" value="Os05t0276500-01"/>
    <property type="gene ID" value="Os05g0276500"/>
</dbReference>
<dbReference type="KEGG" id="dosa:Os05g0276500"/>
<dbReference type="eggNOG" id="ENOG502QS90">
    <property type="taxonomic scope" value="Eukaryota"/>
</dbReference>
<dbReference type="HOGENOM" id="CLU_027462_0_1_1"/>
<dbReference type="InParanoid" id="Q40637"/>
<dbReference type="OMA" id="CDSTKVP"/>
<dbReference type="OrthoDB" id="5823761at2759"/>
<dbReference type="Proteomes" id="UP000000763">
    <property type="component" value="Chromosome 5"/>
</dbReference>
<dbReference type="Proteomes" id="UP000059680">
    <property type="component" value="Chromosome 5"/>
</dbReference>
<dbReference type="GO" id="GO:0005576">
    <property type="term" value="C:extracellular region"/>
    <property type="evidence" value="ECO:0007669"/>
    <property type="project" value="UniProtKB-KW"/>
</dbReference>
<dbReference type="GO" id="GO:0016020">
    <property type="term" value="C:membrane"/>
    <property type="evidence" value="ECO:0007669"/>
    <property type="project" value="UniProtKB-SubCell"/>
</dbReference>
<dbReference type="GO" id="GO:0009828">
    <property type="term" value="P:plant-type cell wall loosening"/>
    <property type="evidence" value="ECO:0000250"/>
    <property type="project" value="UniProtKB"/>
</dbReference>
<dbReference type="CDD" id="cd22274">
    <property type="entry name" value="DPBB_EXPA_N"/>
    <property type="match status" value="1"/>
</dbReference>
<dbReference type="FunFam" id="2.60.40.760:FF:000001">
    <property type="entry name" value="Expansin"/>
    <property type="match status" value="1"/>
</dbReference>
<dbReference type="Gene3D" id="2.60.40.760">
    <property type="entry name" value="Expansin, cellulose-binding-like domain"/>
    <property type="match status" value="1"/>
</dbReference>
<dbReference type="Gene3D" id="2.40.40.10">
    <property type="entry name" value="RlpA-like domain"/>
    <property type="match status" value="1"/>
</dbReference>
<dbReference type="InterPro" id="IPR007118">
    <property type="entry name" value="Expan_Lol_pI"/>
</dbReference>
<dbReference type="InterPro" id="IPR002963">
    <property type="entry name" value="Expansin"/>
</dbReference>
<dbReference type="InterPro" id="IPR007112">
    <property type="entry name" value="Expansin/allergen_DPBB_dom"/>
</dbReference>
<dbReference type="InterPro" id="IPR007117">
    <property type="entry name" value="Expansin_CBD"/>
</dbReference>
<dbReference type="InterPro" id="IPR036749">
    <property type="entry name" value="Expansin_CBD_sf"/>
</dbReference>
<dbReference type="InterPro" id="IPR009009">
    <property type="entry name" value="RlpA-like_DPBB"/>
</dbReference>
<dbReference type="InterPro" id="IPR036908">
    <property type="entry name" value="RlpA-like_sf"/>
</dbReference>
<dbReference type="PANTHER" id="PTHR31867">
    <property type="entry name" value="EXPANSIN-A15"/>
    <property type="match status" value="1"/>
</dbReference>
<dbReference type="Pfam" id="PF03330">
    <property type="entry name" value="DPBB_1"/>
    <property type="match status" value="1"/>
</dbReference>
<dbReference type="Pfam" id="PF01357">
    <property type="entry name" value="Expansin_C"/>
    <property type="match status" value="1"/>
</dbReference>
<dbReference type="PRINTS" id="PR01226">
    <property type="entry name" value="EXPANSIN"/>
</dbReference>
<dbReference type="PRINTS" id="PR01225">
    <property type="entry name" value="EXPANSNFAMLY"/>
</dbReference>
<dbReference type="SMART" id="SM00837">
    <property type="entry name" value="DPBB_1"/>
    <property type="match status" value="1"/>
</dbReference>
<dbReference type="SUPFAM" id="SSF50685">
    <property type="entry name" value="Barwin-like endoglucanases"/>
    <property type="match status" value="1"/>
</dbReference>
<dbReference type="SUPFAM" id="SSF49590">
    <property type="entry name" value="PHL pollen allergen"/>
    <property type="match status" value="1"/>
</dbReference>
<dbReference type="PROSITE" id="PS50843">
    <property type="entry name" value="EXPANSIN_CBD"/>
    <property type="match status" value="1"/>
</dbReference>
<dbReference type="PROSITE" id="PS50842">
    <property type="entry name" value="EXPANSIN_EG45"/>
    <property type="match status" value="1"/>
</dbReference>
<reference key="1">
    <citation type="journal article" date="1995" name="Proc. Natl. Acad. Sci. U.S.A.">
        <title>Molecular cloning and sequence analysis of expansins - a highly conserved, multigene family of proteins that mediate cell wall extension in plants.</title>
        <authorList>
            <person name="Shcherban T.Y."/>
            <person name="Shi J."/>
            <person name="Durachko D.M."/>
            <person name="Guiltinan M.J."/>
            <person name="McQueen-Mason S.J."/>
            <person name="Shieh M."/>
            <person name="Cosgrove D.J."/>
        </authorList>
    </citation>
    <scope>NUCLEOTIDE SEQUENCE [MRNA]</scope>
    <source>
        <strain>cv. Nipponbare</strain>
    </source>
</reference>
<reference key="2">
    <citation type="journal article" date="2005" name="Mol. Genet. Genomics">
        <title>A fine physical map of the rice chromosome 5.</title>
        <authorList>
            <person name="Cheng C.-H."/>
            <person name="Chung M.C."/>
            <person name="Liu S.-M."/>
            <person name="Chen S.-K."/>
            <person name="Kao F.Y."/>
            <person name="Lin S.-J."/>
            <person name="Hsiao S.-H."/>
            <person name="Tseng I.C."/>
            <person name="Hsing Y.-I.C."/>
            <person name="Wu H.-P."/>
            <person name="Chen C.-S."/>
            <person name="Shaw J.-F."/>
            <person name="Wu J."/>
            <person name="Matsumoto T."/>
            <person name="Sasaki T."/>
            <person name="Chen H.-C."/>
            <person name="Chow T.-Y."/>
        </authorList>
    </citation>
    <scope>NUCLEOTIDE SEQUENCE [LARGE SCALE GENOMIC DNA]</scope>
    <source>
        <strain>cv. Nipponbare</strain>
    </source>
</reference>
<reference key="3">
    <citation type="journal article" date="2005" name="Nature">
        <title>The map-based sequence of the rice genome.</title>
        <authorList>
            <consortium name="International rice genome sequencing project (IRGSP)"/>
        </authorList>
    </citation>
    <scope>NUCLEOTIDE SEQUENCE [LARGE SCALE GENOMIC DNA]</scope>
    <source>
        <strain>cv. Nipponbare</strain>
    </source>
</reference>
<reference key="4">
    <citation type="journal article" date="2008" name="Nucleic Acids Res.">
        <title>The rice annotation project database (RAP-DB): 2008 update.</title>
        <authorList>
            <consortium name="The rice annotation project (RAP)"/>
        </authorList>
    </citation>
    <scope>GENOME REANNOTATION</scope>
    <source>
        <strain>cv. Nipponbare</strain>
    </source>
</reference>
<reference key="5">
    <citation type="journal article" date="2013" name="Rice">
        <title>Improvement of the Oryza sativa Nipponbare reference genome using next generation sequence and optical map data.</title>
        <authorList>
            <person name="Kawahara Y."/>
            <person name="de la Bastide M."/>
            <person name="Hamilton J.P."/>
            <person name="Kanamori H."/>
            <person name="McCombie W.R."/>
            <person name="Ouyang S."/>
            <person name="Schwartz D.C."/>
            <person name="Tanaka T."/>
            <person name="Wu J."/>
            <person name="Zhou S."/>
            <person name="Childs K.L."/>
            <person name="Davidson R.M."/>
            <person name="Lin H."/>
            <person name="Quesada-Ocampo L."/>
            <person name="Vaillancourt B."/>
            <person name="Sakai H."/>
            <person name="Lee S.S."/>
            <person name="Kim J."/>
            <person name="Numa H."/>
            <person name="Itoh T."/>
            <person name="Buell C.R."/>
            <person name="Matsumoto T."/>
        </authorList>
    </citation>
    <scope>GENOME REANNOTATION</scope>
    <source>
        <strain>cv. Nipponbare</strain>
    </source>
</reference>
<reference key="6">
    <citation type="journal article" date="2003" name="Science">
        <title>Collection, mapping, and annotation of over 28,000 cDNA clones from japonica rice.</title>
        <authorList>
            <consortium name="The rice full-length cDNA consortium"/>
        </authorList>
    </citation>
    <scope>NUCLEOTIDE SEQUENCE [LARGE SCALE MRNA]</scope>
    <source>
        <strain>cv. Nipponbare</strain>
    </source>
</reference>
<reference key="7">
    <citation type="journal article" date="1997" name="Plant Cell">
        <title>Expression of expansin genes is correlated with growth in deepwater rice.</title>
        <authorList>
            <person name="Cho H.-T."/>
            <person name="Kende H."/>
        </authorList>
    </citation>
    <scope>TISSUE SPECIFICITY</scope>
    <scope>DEVELOPMENTAL STAGE</scope>
    <source>
        <strain>cv. Nipponbare</strain>
        <tissue>Shoot</tissue>
    </source>
</reference>
<reference key="8">
    <citation type="journal article" date="1998" name="Plant J.">
        <title>Tissue localization of expansins in deepwater rice.</title>
        <authorList>
            <person name="Cho H.-T."/>
            <person name="Kende H."/>
        </authorList>
    </citation>
    <scope>TISSUE SPECIFICITY</scope>
</reference>
<reference key="9">
    <citation type="journal article" date="2004" name="Plant Mol. Biol.">
        <title>Nomenclature for members of the expansin superfamily of genes and proteins.</title>
        <authorList>
            <person name="Kende H."/>
            <person name="Bradford K.J."/>
            <person name="Brummell D.A."/>
            <person name="Cho H.-T."/>
            <person name="Cosgrove D.J."/>
            <person name="Fleming A.J."/>
            <person name="Gehring C."/>
            <person name="Lee Y."/>
            <person name="McQueen-Mason S.J."/>
            <person name="Rose J.K.C."/>
            <person name="Voesenek L.A.C."/>
        </authorList>
    </citation>
    <scope>NOMENCLATURE</scope>
</reference>